<proteinExistence type="evidence at protein level"/>
<reference key="1">
    <citation type="journal article" date="2001" name="J. Bacteriol.">
        <title>Genome of the bacterium Streptococcus pneumoniae strain R6.</title>
        <authorList>
            <person name="Hoskins J."/>
            <person name="Alborn W.E. Jr."/>
            <person name="Arnold J."/>
            <person name="Blaszczak L.C."/>
            <person name="Burgett S."/>
            <person name="DeHoff B.S."/>
            <person name="Estrem S.T."/>
            <person name="Fritz L."/>
            <person name="Fu D.-J."/>
            <person name="Fuller W."/>
            <person name="Geringer C."/>
            <person name="Gilmour R."/>
            <person name="Glass J.S."/>
            <person name="Khoja H."/>
            <person name="Kraft A.R."/>
            <person name="Lagace R.E."/>
            <person name="LeBlanc D.J."/>
            <person name="Lee L.N."/>
            <person name="Lefkowitz E.J."/>
            <person name="Lu J."/>
            <person name="Matsushima P."/>
            <person name="McAhren S.M."/>
            <person name="McHenney M."/>
            <person name="McLeaster K."/>
            <person name="Mundy C.W."/>
            <person name="Nicas T.I."/>
            <person name="Norris F.H."/>
            <person name="O'Gara M."/>
            <person name="Peery R.B."/>
            <person name="Robertson G.T."/>
            <person name="Rockey P."/>
            <person name="Sun P.-M."/>
            <person name="Winkler M.E."/>
            <person name="Yang Y."/>
            <person name="Young-Bellido M."/>
            <person name="Zhao G."/>
            <person name="Zook C.A."/>
            <person name="Baltz R.H."/>
            <person name="Jaskunas S.R."/>
            <person name="Rosteck P.R. Jr."/>
            <person name="Skatrud P.L."/>
            <person name="Glass J.I."/>
        </authorList>
    </citation>
    <scope>NUCLEOTIDE SEQUENCE [LARGE SCALE GENOMIC DNA]</scope>
    <source>
        <strain>ATCC BAA-255 / R6</strain>
    </source>
</reference>
<name>DIVIB_STRR6</name>
<comment type="function">
    <text evidence="1">Cell division protein that may be involved in stabilizing or promoting the assembly of the division complex.</text>
</comment>
<comment type="interaction">
    <interactant intactId="EBI-6446264">
        <id>Q8DQM0</id>
    </interactant>
    <interactant intactId="EBI-548564">
        <id>P0AD68</id>
        <label>ftsI</label>
    </interactant>
    <organismsDiffer>true</organismsDiffer>
    <experiments>3</experiments>
</comment>
<comment type="subcellular location">
    <subcellularLocation>
        <location evidence="1">Cell membrane</location>
        <topology evidence="1">Single-pass type II membrane protein</topology>
    </subcellularLocation>
    <text evidence="1">Localizes to the division septum.</text>
</comment>
<comment type="similarity">
    <text evidence="1">Belongs to the FtsQ/DivIB family. DivIB subfamily.</text>
</comment>
<keyword id="KW-0131">Cell cycle</keyword>
<keyword id="KW-0132">Cell division</keyword>
<keyword id="KW-1003">Cell membrane</keyword>
<keyword id="KW-0472">Membrane</keyword>
<keyword id="KW-1185">Reference proteome</keyword>
<keyword id="KW-0812">Transmembrane</keyword>
<keyword id="KW-1133">Transmembrane helix</keyword>
<dbReference type="EMBL" id="AE007317">
    <property type="protein sequence ID" value="AAK99409.1"/>
    <property type="molecule type" value="Genomic_DNA"/>
</dbReference>
<dbReference type="PIR" id="E97947">
    <property type="entry name" value="E97947"/>
</dbReference>
<dbReference type="RefSeq" id="NP_358199.1">
    <property type="nucleotide sequence ID" value="NC_003098.1"/>
</dbReference>
<dbReference type="RefSeq" id="WP_000031166.1">
    <property type="nucleotide sequence ID" value="NC_003098.1"/>
</dbReference>
<dbReference type="IntAct" id="Q8DQM0">
    <property type="interactions" value="2"/>
</dbReference>
<dbReference type="STRING" id="171101.spr0605"/>
<dbReference type="KEGG" id="spr:spr0605"/>
<dbReference type="PATRIC" id="fig|171101.6.peg.672"/>
<dbReference type="eggNOG" id="COG1589">
    <property type="taxonomic scope" value="Bacteria"/>
</dbReference>
<dbReference type="HOGENOM" id="CLU_046278_1_1_9"/>
<dbReference type="Proteomes" id="UP000000586">
    <property type="component" value="Chromosome"/>
</dbReference>
<dbReference type="GO" id="GO:0032153">
    <property type="term" value="C:cell division site"/>
    <property type="evidence" value="ECO:0007669"/>
    <property type="project" value="UniProtKB-UniRule"/>
</dbReference>
<dbReference type="GO" id="GO:0005886">
    <property type="term" value="C:plasma membrane"/>
    <property type="evidence" value="ECO:0007669"/>
    <property type="project" value="UniProtKB-SubCell"/>
</dbReference>
<dbReference type="GO" id="GO:0043093">
    <property type="term" value="P:FtsZ-dependent cytokinesis"/>
    <property type="evidence" value="ECO:0007669"/>
    <property type="project" value="UniProtKB-UniRule"/>
</dbReference>
<dbReference type="Gene3D" id="3.40.50.10960">
    <property type="match status" value="1"/>
</dbReference>
<dbReference type="Gene3D" id="3.10.20.310">
    <property type="entry name" value="membrane protein fhac"/>
    <property type="match status" value="1"/>
</dbReference>
<dbReference type="HAMAP" id="MF_00912">
    <property type="entry name" value="DivIB"/>
    <property type="match status" value="1"/>
</dbReference>
<dbReference type="InterPro" id="IPR026580">
    <property type="entry name" value="DivIB"/>
</dbReference>
<dbReference type="InterPro" id="IPR050487">
    <property type="entry name" value="FtsQ_DivIB"/>
</dbReference>
<dbReference type="InterPro" id="IPR034746">
    <property type="entry name" value="POTRA"/>
</dbReference>
<dbReference type="InterPro" id="IPR013685">
    <property type="entry name" value="POTRA_FtsQ_type"/>
</dbReference>
<dbReference type="PANTHER" id="PTHR37820">
    <property type="entry name" value="CELL DIVISION PROTEIN DIVIB"/>
    <property type="match status" value="1"/>
</dbReference>
<dbReference type="PANTHER" id="PTHR37820:SF1">
    <property type="entry name" value="CELL DIVISION PROTEIN FTSQ"/>
    <property type="match status" value="1"/>
</dbReference>
<dbReference type="Pfam" id="PF08478">
    <property type="entry name" value="POTRA_1"/>
    <property type="match status" value="1"/>
</dbReference>
<dbReference type="PROSITE" id="PS51779">
    <property type="entry name" value="POTRA"/>
    <property type="match status" value="1"/>
</dbReference>
<protein>
    <recommendedName>
        <fullName evidence="1">Cell division protein DivIB</fullName>
    </recommendedName>
</protein>
<evidence type="ECO:0000255" key="1">
    <source>
        <dbReference type="HAMAP-Rule" id="MF_00912"/>
    </source>
</evidence>
<evidence type="ECO:0000255" key="2">
    <source>
        <dbReference type="PROSITE-ProRule" id="PRU01115"/>
    </source>
</evidence>
<evidence type="ECO:0000256" key="3">
    <source>
        <dbReference type="SAM" id="MobiDB-lite"/>
    </source>
</evidence>
<sequence>MSKDKKNEDKETLEELKELSEWQKRNQEYLKKKAEEEVALAEEKEKERQARMGEESEKSEDKQDQESETDQEDSESAKEESEEKVASSEADKEKEEPESKEKEEQDKKLAKKATKEKPAKAKIPGIHILRAFTILFPSLLLLIVSAYLLSPYATMKDIRVEGTVQTTADDIRQASGIQDSDYTINLLLDKAKYEKQIKSNYWVESAQLVYQFPTKFTIKVKEYDIVAYYISGENHYPILSSGQLETSSVSLNSLPETYLSVLFNDSEQIKVFVSELAQISPELKAAIQKVELAPSKVTSDLIRLTMNDSDEVLVPLSEMSKKLPYYSKIKPQLSEPSVVDMEAGIYSYTVADKLIMEAEEKAKQEAKEAEKKQEEEQKKQEEESNRNQTNQRSSRR</sequence>
<gene>
    <name evidence="1" type="primary">divIB</name>
    <name type="ordered locus">spr0605</name>
</gene>
<accession>Q8DQM0</accession>
<feature type="chain" id="PRO_0000414790" description="Cell division protein DivIB">
    <location>
        <begin position="1"/>
        <end position="396"/>
    </location>
</feature>
<feature type="topological domain" description="Cytoplasmic" evidence="1">
    <location>
        <begin position="1"/>
        <end position="130"/>
    </location>
</feature>
<feature type="transmembrane region" description="Helical" evidence="1">
    <location>
        <begin position="131"/>
        <end position="151"/>
    </location>
</feature>
<feature type="topological domain" description="Extracellular" evidence="1">
    <location>
        <begin position="152"/>
        <end position="396"/>
    </location>
</feature>
<feature type="domain" description="POTRA" evidence="2">
    <location>
        <begin position="153"/>
        <end position="223"/>
    </location>
</feature>
<feature type="region of interest" description="Disordered" evidence="3">
    <location>
        <begin position="1"/>
        <end position="23"/>
    </location>
</feature>
<feature type="region of interest" description="Disordered" evidence="3">
    <location>
        <begin position="37"/>
        <end position="116"/>
    </location>
</feature>
<feature type="region of interest" description="Disordered" evidence="3">
    <location>
        <begin position="361"/>
        <end position="396"/>
    </location>
</feature>
<feature type="compositionally biased region" description="Basic and acidic residues" evidence="3">
    <location>
        <begin position="37"/>
        <end position="65"/>
    </location>
</feature>
<feature type="compositionally biased region" description="Basic and acidic residues" evidence="3">
    <location>
        <begin position="75"/>
        <end position="116"/>
    </location>
</feature>
<feature type="compositionally biased region" description="Basic and acidic residues" evidence="3">
    <location>
        <begin position="361"/>
        <end position="385"/>
    </location>
</feature>
<feature type="compositionally biased region" description="Low complexity" evidence="3">
    <location>
        <begin position="386"/>
        <end position="396"/>
    </location>
</feature>
<organism>
    <name type="scientific">Streptococcus pneumoniae (strain ATCC BAA-255 / R6)</name>
    <dbReference type="NCBI Taxonomy" id="171101"/>
    <lineage>
        <taxon>Bacteria</taxon>
        <taxon>Bacillati</taxon>
        <taxon>Bacillota</taxon>
        <taxon>Bacilli</taxon>
        <taxon>Lactobacillales</taxon>
        <taxon>Streptococcaceae</taxon>
        <taxon>Streptococcus</taxon>
    </lineage>
</organism>